<accession>Q9X7A2</accession>
<proteinExistence type="inferred from homology"/>
<protein>
    <recommendedName>
        <fullName evidence="1">Large ribosomal subunit protein bL36</fullName>
    </recommendedName>
    <alternativeName>
        <fullName evidence="2">50S ribosomal protein L36</fullName>
    </alternativeName>
</protein>
<evidence type="ECO:0000255" key="1">
    <source>
        <dbReference type="HAMAP-Rule" id="MF_00251"/>
    </source>
</evidence>
<evidence type="ECO:0000305" key="2"/>
<comment type="similarity">
    <text evidence="1">Belongs to the bacterial ribosomal protein bL36 family.</text>
</comment>
<organism>
    <name type="scientific">Mycobacterium leprae (strain TN)</name>
    <dbReference type="NCBI Taxonomy" id="272631"/>
    <lineage>
        <taxon>Bacteria</taxon>
        <taxon>Bacillati</taxon>
        <taxon>Actinomycetota</taxon>
        <taxon>Actinomycetes</taxon>
        <taxon>Mycobacteriales</taxon>
        <taxon>Mycobacteriaceae</taxon>
        <taxon>Mycobacterium</taxon>
    </lineage>
</organism>
<feature type="chain" id="PRO_0000126215" description="Large ribosomal subunit protein bL36">
    <location>
        <begin position="1"/>
        <end position="37"/>
    </location>
</feature>
<keyword id="KW-1185">Reference proteome</keyword>
<keyword id="KW-0687">Ribonucleoprotein</keyword>
<keyword id="KW-0689">Ribosomal protein</keyword>
<sequence>MKVNPSVKPMCDKCRVIRRHRRVMVICVDPRHKQRQG</sequence>
<name>RL36_MYCLE</name>
<reference key="1">
    <citation type="journal article" date="2001" name="Nature">
        <title>Massive gene decay in the leprosy bacillus.</title>
        <authorList>
            <person name="Cole S.T."/>
            <person name="Eiglmeier K."/>
            <person name="Parkhill J."/>
            <person name="James K.D."/>
            <person name="Thomson N.R."/>
            <person name="Wheeler P.R."/>
            <person name="Honore N."/>
            <person name="Garnier T."/>
            <person name="Churcher C.M."/>
            <person name="Harris D.E."/>
            <person name="Mungall K.L."/>
            <person name="Basham D."/>
            <person name="Brown D."/>
            <person name="Chillingworth T."/>
            <person name="Connor R."/>
            <person name="Davies R.M."/>
            <person name="Devlin K."/>
            <person name="Duthoy S."/>
            <person name="Feltwell T."/>
            <person name="Fraser A."/>
            <person name="Hamlin N."/>
            <person name="Holroyd S."/>
            <person name="Hornsby T."/>
            <person name="Jagels K."/>
            <person name="Lacroix C."/>
            <person name="Maclean J."/>
            <person name="Moule S."/>
            <person name="Murphy L.D."/>
            <person name="Oliver K."/>
            <person name="Quail M.A."/>
            <person name="Rajandream M.A."/>
            <person name="Rutherford K.M."/>
            <person name="Rutter S."/>
            <person name="Seeger K."/>
            <person name="Simon S."/>
            <person name="Simmonds M."/>
            <person name="Skelton J."/>
            <person name="Squares R."/>
            <person name="Squares S."/>
            <person name="Stevens K."/>
            <person name="Taylor K."/>
            <person name="Whitehead S."/>
            <person name="Woodward J.R."/>
            <person name="Barrell B.G."/>
        </authorList>
    </citation>
    <scope>NUCLEOTIDE SEQUENCE [LARGE SCALE GENOMIC DNA]</scope>
    <source>
        <strain>TN</strain>
    </source>
</reference>
<dbReference type="EMBL" id="AL049491">
    <property type="protein sequence ID" value="CAB39837.1"/>
    <property type="molecule type" value="Genomic_DNA"/>
</dbReference>
<dbReference type="EMBL" id="AL583923">
    <property type="protein sequence ID" value="CAC30916.1"/>
    <property type="molecule type" value="Genomic_DNA"/>
</dbReference>
<dbReference type="PIR" id="D87154">
    <property type="entry name" value="D87154"/>
</dbReference>
<dbReference type="RefSeq" id="NP_302326.1">
    <property type="nucleotide sequence ID" value="NC_002677.1"/>
</dbReference>
<dbReference type="RefSeq" id="WP_010908647.1">
    <property type="nucleotide sequence ID" value="NC_002677.1"/>
</dbReference>
<dbReference type="SMR" id="Q9X7A2"/>
<dbReference type="STRING" id="272631.gene:17575813"/>
<dbReference type="KEGG" id="mle:ML1961"/>
<dbReference type="PATRIC" id="fig|272631.5.peg.3711"/>
<dbReference type="Leproma" id="ML1961"/>
<dbReference type="eggNOG" id="COG0257">
    <property type="taxonomic scope" value="Bacteria"/>
</dbReference>
<dbReference type="HOGENOM" id="CLU_135723_6_2_11"/>
<dbReference type="Proteomes" id="UP000000806">
    <property type="component" value="Chromosome"/>
</dbReference>
<dbReference type="GO" id="GO:0005737">
    <property type="term" value="C:cytoplasm"/>
    <property type="evidence" value="ECO:0007669"/>
    <property type="project" value="UniProtKB-ARBA"/>
</dbReference>
<dbReference type="GO" id="GO:1990904">
    <property type="term" value="C:ribonucleoprotein complex"/>
    <property type="evidence" value="ECO:0007669"/>
    <property type="project" value="UniProtKB-KW"/>
</dbReference>
<dbReference type="GO" id="GO:0005840">
    <property type="term" value="C:ribosome"/>
    <property type="evidence" value="ECO:0007669"/>
    <property type="project" value="UniProtKB-KW"/>
</dbReference>
<dbReference type="GO" id="GO:0003735">
    <property type="term" value="F:structural constituent of ribosome"/>
    <property type="evidence" value="ECO:0007669"/>
    <property type="project" value="InterPro"/>
</dbReference>
<dbReference type="GO" id="GO:0006412">
    <property type="term" value="P:translation"/>
    <property type="evidence" value="ECO:0007669"/>
    <property type="project" value="UniProtKB-UniRule"/>
</dbReference>
<dbReference type="HAMAP" id="MF_00251">
    <property type="entry name" value="Ribosomal_bL36"/>
    <property type="match status" value="1"/>
</dbReference>
<dbReference type="InterPro" id="IPR000473">
    <property type="entry name" value="Ribosomal_bL36"/>
</dbReference>
<dbReference type="InterPro" id="IPR035977">
    <property type="entry name" value="Ribosomal_bL36_sp"/>
</dbReference>
<dbReference type="NCBIfam" id="TIGR01022">
    <property type="entry name" value="rpmJ_bact"/>
    <property type="match status" value="1"/>
</dbReference>
<dbReference type="PANTHER" id="PTHR42888">
    <property type="entry name" value="50S RIBOSOMAL PROTEIN L36, CHLOROPLASTIC"/>
    <property type="match status" value="1"/>
</dbReference>
<dbReference type="PANTHER" id="PTHR42888:SF1">
    <property type="entry name" value="LARGE RIBOSOMAL SUBUNIT PROTEIN BL36C"/>
    <property type="match status" value="1"/>
</dbReference>
<dbReference type="Pfam" id="PF00444">
    <property type="entry name" value="Ribosomal_L36"/>
    <property type="match status" value="1"/>
</dbReference>
<dbReference type="SUPFAM" id="SSF57840">
    <property type="entry name" value="Ribosomal protein L36"/>
    <property type="match status" value="1"/>
</dbReference>
<dbReference type="PROSITE" id="PS00828">
    <property type="entry name" value="RIBOSOMAL_L36"/>
    <property type="match status" value="1"/>
</dbReference>
<gene>
    <name evidence="1" type="primary">rpmJ</name>
    <name type="ordered locus">ML1961</name>
    <name type="ORF">MLCB1222.31c</name>
</gene>